<gene>
    <name type="primary">yidC</name>
    <name type="ordered locus">Rv3921c</name>
    <name type="ORF">MTV028.12c</name>
</gene>
<keyword id="KW-1003">Cell membrane</keyword>
<keyword id="KW-0143">Chaperone</keyword>
<keyword id="KW-0472">Membrane</keyword>
<keyword id="KW-0653">Protein transport</keyword>
<keyword id="KW-1185">Reference proteome</keyword>
<keyword id="KW-0812">Transmembrane</keyword>
<keyword id="KW-1133">Transmembrane helix</keyword>
<keyword id="KW-0813">Transport</keyword>
<reference key="1">
    <citation type="journal article" date="1998" name="Nature">
        <title>Deciphering the biology of Mycobacterium tuberculosis from the complete genome sequence.</title>
        <authorList>
            <person name="Cole S.T."/>
            <person name="Brosch R."/>
            <person name="Parkhill J."/>
            <person name="Garnier T."/>
            <person name="Churcher C.M."/>
            <person name="Harris D.E."/>
            <person name="Gordon S.V."/>
            <person name="Eiglmeier K."/>
            <person name="Gas S."/>
            <person name="Barry C.E. III"/>
            <person name="Tekaia F."/>
            <person name="Badcock K."/>
            <person name="Basham D."/>
            <person name="Brown D."/>
            <person name="Chillingworth T."/>
            <person name="Connor R."/>
            <person name="Davies R.M."/>
            <person name="Devlin K."/>
            <person name="Feltwell T."/>
            <person name="Gentles S."/>
            <person name="Hamlin N."/>
            <person name="Holroyd S."/>
            <person name="Hornsby T."/>
            <person name="Jagels K."/>
            <person name="Krogh A."/>
            <person name="McLean J."/>
            <person name="Moule S."/>
            <person name="Murphy L.D."/>
            <person name="Oliver S."/>
            <person name="Osborne J."/>
            <person name="Quail M.A."/>
            <person name="Rajandream M.A."/>
            <person name="Rogers J."/>
            <person name="Rutter S."/>
            <person name="Seeger K."/>
            <person name="Skelton S."/>
            <person name="Squares S."/>
            <person name="Squares R."/>
            <person name="Sulston J.E."/>
            <person name="Taylor K."/>
            <person name="Whitehead S."/>
            <person name="Barrell B.G."/>
        </authorList>
    </citation>
    <scope>NUCLEOTIDE SEQUENCE [LARGE SCALE GENOMIC DNA]</scope>
    <source>
        <strain>ATCC 25618 / H37Rv</strain>
    </source>
</reference>
<reference key="2">
    <citation type="journal article" date="2011" name="Mol. Cell. Proteomics">
        <title>Proteogenomic analysis of Mycobacterium tuberculosis by high resolution mass spectrometry.</title>
        <authorList>
            <person name="Kelkar D.S."/>
            <person name="Kumar D."/>
            <person name="Kumar P."/>
            <person name="Balakrishnan L."/>
            <person name="Muthusamy B."/>
            <person name="Yadav A.K."/>
            <person name="Shrivastava P."/>
            <person name="Marimuthu A."/>
            <person name="Anand S."/>
            <person name="Sundaram H."/>
            <person name="Kingsbury R."/>
            <person name="Harsha H.C."/>
            <person name="Nair B."/>
            <person name="Prasad T.S."/>
            <person name="Chauhan D.S."/>
            <person name="Katoch K."/>
            <person name="Katoch V.M."/>
            <person name="Kumar P."/>
            <person name="Chaerkady R."/>
            <person name="Ramachandran S."/>
            <person name="Dash D."/>
            <person name="Pandey A."/>
        </authorList>
    </citation>
    <scope>IDENTIFICATION BY MASS SPECTROMETRY [LARGE SCALE ANALYSIS]</scope>
    <source>
        <strain>ATCC 25618 / H37Rv</strain>
    </source>
</reference>
<sequence length="366" mass="40916">MSLLFDFFSLDFIYYPVSWIMWVWYRLFAFVLGPSNFFAWALSVMFLVFTLRALLYKPFVRQIRTTRQMQELQPQIKALQKKYGKDRQRMALEMQKLQREHGFNPILGCLPMLAQIPVFLGLYHVLRSFNRTTGGFGQPHLSVIENRLTGNYVFSPVDVGHFLDANLFGAPIGAYMTQRSGLDAFVDFSRPALIAVGVPVMILAGIATYFNSRASIARQSAEAAANPQTAMMNKLALYVFPLGVVVGGPFLPLAIILYWFSNNIWTFGQQHYVFGMIEKEEEAKKQEAVRRRAANAPAPGAKPKRSPKTAPATNAAAPTEAGDTDDGAESDASTERPADTSNPARRNSGPSARTPRPGVRPKKRKR</sequence>
<evidence type="ECO:0000250" key="1"/>
<evidence type="ECO:0000255" key="2"/>
<evidence type="ECO:0000256" key="3">
    <source>
        <dbReference type="SAM" id="MobiDB-lite"/>
    </source>
</evidence>
<evidence type="ECO:0000305" key="4"/>
<dbReference type="EMBL" id="AL123456">
    <property type="protein sequence ID" value="CCP46750.1"/>
    <property type="molecule type" value="Genomic_DNA"/>
</dbReference>
<dbReference type="PIR" id="A70852">
    <property type="entry name" value="A70852"/>
</dbReference>
<dbReference type="RefSeq" id="NP_218438.1">
    <property type="nucleotide sequence ID" value="NC_000962.3"/>
</dbReference>
<dbReference type="RefSeq" id="WP_003899765.1">
    <property type="nucleotide sequence ID" value="NZ_NVQJ01000005.1"/>
</dbReference>
<dbReference type="SMR" id="P9WIT5"/>
<dbReference type="FunCoup" id="P9WIT5">
    <property type="interactions" value="25"/>
</dbReference>
<dbReference type="STRING" id="83332.Rv3921c"/>
<dbReference type="PaxDb" id="83332-Rv3921c"/>
<dbReference type="DNASU" id="886238"/>
<dbReference type="GeneID" id="45427921"/>
<dbReference type="GeneID" id="886238"/>
<dbReference type="KEGG" id="mtu:Rv3921c"/>
<dbReference type="KEGG" id="mtv:RVBD_3921c"/>
<dbReference type="PATRIC" id="fig|83332.111.peg.4367"/>
<dbReference type="TubercuList" id="Rv3921c"/>
<dbReference type="eggNOG" id="COG0706">
    <property type="taxonomic scope" value="Bacteria"/>
</dbReference>
<dbReference type="InParanoid" id="P9WIT5"/>
<dbReference type="OrthoDB" id="9780552at2"/>
<dbReference type="PhylomeDB" id="P9WIT5"/>
<dbReference type="Proteomes" id="UP000001584">
    <property type="component" value="Chromosome"/>
</dbReference>
<dbReference type="GO" id="GO:0005886">
    <property type="term" value="C:plasma membrane"/>
    <property type="evidence" value="ECO:0007005"/>
    <property type="project" value="MTBBASE"/>
</dbReference>
<dbReference type="GO" id="GO:0032977">
    <property type="term" value="F:membrane insertase activity"/>
    <property type="evidence" value="ECO:0000318"/>
    <property type="project" value="GO_Central"/>
</dbReference>
<dbReference type="GO" id="GO:0051205">
    <property type="term" value="P:protein insertion into membrane"/>
    <property type="evidence" value="ECO:0000318"/>
    <property type="project" value="GO_Central"/>
</dbReference>
<dbReference type="GO" id="GO:0015031">
    <property type="term" value="P:protein transport"/>
    <property type="evidence" value="ECO:0007669"/>
    <property type="project" value="UniProtKB-KW"/>
</dbReference>
<dbReference type="CDD" id="cd20070">
    <property type="entry name" value="5TM_YidC_Alb3"/>
    <property type="match status" value="1"/>
</dbReference>
<dbReference type="InterPro" id="IPR001708">
    <property type="entry name" value="YidC/ALB3/OXA1/COX18"/>
</dbReference>
<dbReference type="InterPro" id="IPR028055">
    <property type="entry name" value="YidC/Oxa/ALB_C"/>
</dbReference>
<dbReference type="InterPro" id="IPR047196">
    <property type="entry name" value="YidC_ALB_C"/>
</dbReference>
<dbReference type="NCBIfam" id="NF002899">
    <property type="entry name" value="PRK03449.1"/>
    <property type="match status" value="1"/>
</dbReference>
<dbReference type="NCBIfam" id="TIGR03592">
    <property type="entry name" value="yidC_oxa1_cterm"/>
    <property type="match status" value="1"/>
</dbReference>
<dbReference type="PANTHER" id="PTHR12428:SF65">
    <property type="entry name" value="CYTOCHROME C OXIDASE ASSEMBLY PROTEIN COX18, MITOCHONDRIAL"/>
    <property type="match status" value="1"/>
</dbReference>
<dbReference type="PANTHER" id="PTHR12428">
    <property type="entry name" value="OXA1"/>
    <property type="match status" value="1"/>
</dbReference>
<dbReference type="Pfam" id="PF02096">
    <property type="entry name" value="60KD_IMP"/>
    <property type="match status" value="1"/>
</dbReference>
<comment type="function">
    <text evidence="1">Required for the insertion and/or proper folding and/or complex formation of integral membrane proteins into the membrane. Involved in integration of membrane proteins that insert both dependently and independently of the Sec translocase complex, as well as at least some lipoproteins. Aids folding of multispanning membrane proteins (By similarity).</text>
</comment>
<comment type="subunit">
    <text evidence="1">Interacts with the Sec translocase complex via SecD. Specifically interacts with transmembrane segments of nascent integral membrane proteins during membrane integration (By similarity).</text>
</comment>
<comment type="subcellular location">
    <subcellularLocation>
        <location evidence="1">Cell membrane</location>
        <topology evidence="1">Multi-pass membrane protein</topology>
    </subcellularLocation>
</comment>
<comment type="similarity">
    <text evidence="4">Belongs to the OXA1/ALB3/YidC family. Type 1 subfamily.</text>
</comment>
<organism>
    <name type="scientific">Mycobacterium tuberculosis (strain ATCC 25618 / H37Rv)</name>
    <dbReference type="NCBI Taxonomy" id="83332"/>
    <lineage>
        <taxon>Bacteria</taxon>
        <taxon>Bacillati</taxon>
        <taxon>Actinomycetota</taxon>
        <taxon>Actinomycetes</taxon>
        <taxon>Mycobacteriales</taxon>
        <taxon>Mycobacteriaceae</taxon>
        <taxon>Mycobacterium</taxon>
        <taxon>Mycobacterium tuberculosis complex</taxon>
    </lineage>
</organism>
<proteinExistence type="evidence at protein level"/>
<protein>
    <recommendedName>
        <fullName>Membrane protein insertase YidC</fullName>
    </recommendedName>
    <alternativeName>
        <fullName>Foldase YidC</fullName>
    </alternativeName>
    <alternativeName>
        <fullName>Membrane integrase YidC</fullName>
    </alternativeName>
    <alternativeName>
        <fullName>Membrane protein YidC</fullName>
    </alternativeName>
</protein>
<name>YIDC_MYCTU</name>
<accession>P9WIT5</accession>
<accession>L0TH52</accession>
<accession>O53599</accession>
<accession>P65626</accession>
<accession>Q7TVC3</accession>
<feature type="chain" id="PRO_0000124730" description="Membrane protein insertase YidC">
    <location>
        <begin position="1"/>
        <end position="366"/>
    </location>
</feature>
<feature type="transmembrane region" description="Helical" evidence="2">
    <location>
        <begin position="3"/>
        <end position="23"/>
    </location>
</feature>
<feature type="transmembrane region" description="Helical" evidence="2">
    <location>
        <begin position="28"/>
        <end position="48"/>
    </location>
</feature>
<feature type="transmembrane region" description="Helical" evidence="2">
    <location>
        <begin position="106"/>
        <end position="126"/>
    </location>
</feature>
<feature type="transmembrane region" description="Helical" evidence="2">
    <location>
        <begin position="191"/>
        <end position="211"/>
    </location>
</feature>
<feature type="transmembrane region" description="Helical" evidence="2">
    <location>
        <begin position="237"/>
        <end position="257"/>
    </location>
</feature>
<feature type="region of interest" description="Disordered" evidence="3">
    <location>
        <begin position="285"/>
        <end position="366"/>
    </location>
</feature>
<feature type="compositionally biased region" description="Low complexity" evidence="3">
    <location>
        <begin position="308"/>
        <end position="321"/>
    </location>
</feature>
<feature type="compositionally biased region" description="Polar residues" evidence="3">
    <location>
        <begin position="339"/>
        <end position="351"/>
    </location>
</feature>